<reference key="1">
    <citation type="journal article" date="2005" name="BMC Genomics">
        <title>Characterization of 954 bovine full-CDS cDNA sequences.</title>
        <authorList>
            <person name="Harhay G.P."/>
            <person name="Sonstegard T.S."/>
            <person name="Keele J.W."/>
            <person name="Heaton M.P."/>
            <person name="Clawson M.L."/>
            <person name="Snelling W.M."/>
            <person name="Wiedmann R.T."/>
            <person name="Van Tassell C.P."/>
            <person name="Smith T.P.L."/>
        </authorList>
    </citation>
    <scope>NUCLEOTIDE SEQUENCE [LARGE SCALE MRNA]</scope>
</reference>
<evidence type="ECO:0000250" key="1"/>
<evidence type="ECO:0000250" key="2">
    <source>
        <dbReference type="UniProtKB" id="O43609"/>
    </source>
</evidence>
<evidence type="ECO:0000250" key="3">
    <source>
        <dbReference type="UniProtKB" id="Q9QXV9"/>
    </source>
</evidence>
<evidence type="ECO:0000255" key="4">
    <source>
        <dbReference type="PROSITE-ProRule" id="PRU00572"/>
    </source>
</evidence>
<evidence type="ECO:0000256" key="5">
    <source>
        <dbReference type="SAM" id="MobiDB-lite"/>
    </source>
</evidence>
<evidence type="ECO:0000305" key="6"/>
<accession>A5D992</accession>
<organism>
    <name type="scientific">Bos taurus</name>
    <name type="common">Bovine</name>
    <dbReference type="NCBI Taxonomy" id="9913"/>
    <lineage>
        <taxon>Eukaryota</taxon>
        <taxon>Metazoa</taxon>
        <taxon>Chordata</taxon>
        <taxon>Craniata</taxon>
        <taxon>Vertebrata</taxon>
        <taxon>Euteleostomi</taxon>
        <taxon>Mammalia</taxon>
        <taxon>Eutheria</taxon>
        <taxon>Laurasiatheria</taxon>
        <taxon>Artiodactyla</taxon>
        <taxon>Ruminantia</taxon>
        <taxon>Pecora</taxon>
        <taxon>Bovidae</taxon>
        <taxon>Bovinae</taxon>
        <taxon>Bos</taxon>
    </lineage>
</organism>
<comment type="function">
    <text evidence="3">Inhibits fibroblast growth factor (FGF)-induced retinal lens fiber differentiation, probably by inhibiting FGF-mediated phosphorylation of ERK1/2 (By similarity). Inhibits TGFB-induced epithelial-to-mesenchymal transition in lens epithelial cells (By similarity).</text>
</comment>
<comment type="subunit">
    <text evidence="3">Forms heterodimers with SPRY2 (By similarity). Interacts with TESK1 (By similarity). Interacts with CAV1 (via C-terminus) (By similarity).</text>
</comment>
<comment type="subcellular location">
    <subcellularLocation>
        <location evidence="1">Cytoplasm</location>
    </subcellularLocation>
    <subcellularLocation>
        <location evidence="1">Membrane</location>
        <topology evidence="1">Peripheral membrane protein</topology>
    </subcellularLocation>
    <text evidence="1">Found in the cytoplasm in unstimulated cells but is translocated to the membrane ruffles in cells stimulated with EGF (epidermal growth factor).</text>
</comment>
<comment type="domain">
    <text evidence="1">The Cys-rich domain is responsible for the localization of the protein to the membrane ruffles.</text>
</comment>
<comment type="similarity">
    <text evidence="6">Belongs to the sprouty family.</text>
</comment>
<proteinExistence type="evidence at transcript level"/>
<feature type="chain" id="PRO_0000295297" description="Protein sprouty homolog 1">
    <location>
        <begin position="1"/>
        <end position="319"/>
    </location>
</feature>
<feature type="domain" description="SPR" evidence="4">
    <location>
        <begin position="183"/>
        <end position="295"/>
    </location>
</feature>
<feature type="region of interest" description="Disordered" evidence="5">
    <location>
        <begin position="54"/>
        <end position="157"/>
    </location>
</feature>
<feature type="compositionally biased region" description="Basic and acidic residues" evidence="5">
    <location>
        <begin position="69"/>
        <end position="79"/>
    </location>
</feature>
<feature type="compositionally biased region" description="Low complexity" evidence="5">
    <location>
        <begin position="112"/>
        <end position="131"/>
    </location>
</feature>
<feature type="modified residue" description="N-acetylmethionine" evidence="2">
    <location>
        <position position="1"/>
    </location>
</feature>
<name>SPY1_BOVIN</name>
<dbReference type="EMBL" id="BT030511">
    <property type="protein sequence ID" value="ABQ12951.1"/>
    <property type="molecule type" value="mRNA"/>
</dbReference>
<dbReference type="RefSeq" id="NP_001092836.1">
    <property type="nucleotide sequence ID" value="NM_001099366.1"/>
</dbReference>
<dbReference type="SMR" id="A5D992"/>
<dbReference type="FunCoup" id="A5D992">
    <property type="interactions" value="203"/>
</dbReference>
<dbReference type="STRING" id="9913.ENSBTAP00000028307"/>
<dbReference type="PaxDb" id="9913-ENSBTAP00000028307"/>
<dbReference type="GeneID" id="507095"/>
<dbReference type="KEGG" id="bta:507095"/>
<dbReference type="CTD" id="10252"/>
<dbReference type="eggNOG" id="ENOG502QSDN">
    <property type="taxonomic scope" value="Eukaryota"/>
</dbReference>
<dbReference type="InParanoid" id="A5D992"/>
<dbReference type="OrthoDB" id="10038884at2759"/>
<dbReference type="Proteomes" id="UP000009136">
    <property type="component" value="Unplaced"/>
</dbReference>
<dbReference type="GO" id="GO:0005829">
    <property type="term" value="C:cytosol"/>
    <property type="evidence" value="ECO:0000318"/>
    <property type="project" value="GO_Central"/>
</dbReference>
<dbReference type="GO" id="GO:0016020">
    <property type="term" value="C:membrane"/>
    <property type="evidence" value="ECO:0007669"/>
    <property type="project" value="UniProtKB-SubCell"/>
</dbReference>
<dbReference type="GO" id="GO:0048513">
    <property type="term" value="P:animal organ development"/>
    <property type="evidence" value="ECO:0000318"/>
    <property type="project" value="GO_Central"/>
</dbReference>
<dbReference type="GO" id="GO:0010719">
    <property type="term" value="P:negative regulation of epithelial to mesenchymal transition"/>
    <property type="evidence" value="ECO:0000250"/>
    <property type="project" value="UniProtKB"/>
</dbReference>
<dbReference type="GO" id="GO:0070373">
    <property type="term" value="P:negative regulation of ERK1 and ERK2 cascade"/>
    <property type="evidence" value="ECO:0000250"/>
    <property type="project" value="UniProtKB"/>
</dbReference>
<dbReference type="GO" id="GO:0040037">
    <property type="term" value="P:negative regulation of fibroblast growth factor receptor signaling pathway"/>
    <property type="evidence" value="ECO:0000318"/>
    <property type="project" value="GO_Central"/>
</dbReference>
<dbReference type="GO" id="GO:1902747">
    <property type="term" value="P:negative regulation of lens fiber cell differentiation"/>
    <property type="evidence" value="ECO:0000250"/>
    <property type="project" value="UniProtKB"/>
</dbReference>
<dbReference type="GO" id="GO:0046580">
    <property type="term" value="P:negative regulation of Ras protein signal transduction"/>
    <property type="evidence" value="ECO:0000318"/>
    <property type="project" value="GO_Central"/>
</dbReference>
<dbReference type="GO" id="GO:0030512">
    <property type="term" value="P:negative regulation of transforming growth factor beta receptor signaling pathway"/>
    <property type="evidence" value="ECO:0000250"/>
    <property type="project" value="UniProtKB"/>
</dbReference>
<dbReference type="InterPro" id="IPR007875">
    <property type="entry name" value="Sprouty"/>
</dbReference>
<dbReference type="InterPro" id="IPR051192">
    <property type="entry name" value="Sprouty_domain"/>
</dbReference>
<dbReference type="PANTHER" id="PTHR12365:SF10">
    <property type="entry name" value="PROTEIN SPROUTY HOMOLOG 1"/>
    <property type="match status" value="1"/>
</dbReference>
<dbReference type="PANTHER" id="PTHR12365">
    <property type="entry name" value="SPROUTY"/>
    <property type="match status" value="1"/>
</dbReference>
<dbReference type="Pfam" id="PF05210">
    <property type="entry name" value="Sprouty"/>
    <property type="match status" value="1"/>
</dbReference>
<dbReference type="PROSITE" id="PS51227">
    <property type="entry name" value="SPR"/>
    <property type="match status" value="1"/>
</dbReference>
<keyword id="KW-0007">Acetylation</keyword>
<keyword id="KW-0963">Cytoplasm</keyword>
<keyword id="KW-0217">Developmental protein</keyword>
<keyword id="KW-0472">Membrane</keyword>
<keyword id="KW-1185">Reference proteome</keyword>
<gene>
    <name type="primary">SPRY1</name>
</gene>
<protein>
    <recommendedName>
        <fullName>Protein sprouty homolog 1</fullName>
        <shortName>Spry-1</shortName>
    </recommendedName>
</protein>
<sequence length="319" mass="34959">MDPQNQHGSGSSLVVIQQPALDNRQRLDYEREIQPAAILSLDQIKAIRGSNEYTEGPSVVKRPAPRTAPRQEKHERTHEIIPINVNNNYEHRPTSHLGHAGLSNNTRGPILSRSTSTGSAASSGSNSSASSEQGLLGRSPPTRPIPGHRSERAIRTQPKQLIVDDLKGSLKEDLTQHKFICEQCGKCKCGECTAPRTLPSCLACNRQCLCSAESMVEYGTCMCLVKGIFYHCSNDDEGDSYSDNPCSCSQSQCCSRYLCMGAMSLFLPCLLCYPPAKGCLKLCRGCYDWIHRPGCRCKNSNTVYCKLESCPSRGLGKPS</sequence>